<evidence type="ECO:0000250" key="1"/>
<evidence type="ECO:0000255" key="2"/>
<evidence type="ECO:0000255" key="3">
    <source>
        <dbReference type="PROSITE-ProRule" id="PRU00131"/>
    </source>
</evidence>
<evidence type="ECO:0000256" key="4">
    <source>
        <dbReference type="SAM" id="MobiDB-lite"/>
    </source>
</evidence>
<evidence type="ECO:0000269" key="5">
    <source>
    </source>
</evidence>
<evidence type="ECO:0000269" key="6">
    <source>
    </source>
</evidence>
<evidence type="ECO:0000269" key="7">
    <source>
    </source>
</evidence>
<evidence type="ECO:0000269" key="8">
    <source>
    </source>
</evidence>
<evidence type="ECO:0000303" key="9">
    <source>
    </source>
</evidence>
<evidence type="ECO:0000305" key="10"/>
<evidence type="ECO:0000312" key="11">
    <source>
        <dbReference type="FlyBase" id="FBgn0010051"/>
    </source>
</evidence>
<sequence>MGDNIIGSASFLHLGDIVSLYAEGSVCGFLSTLGLVDDRTVVCPEAGDLSCPPKKFRDCLIKICPMNRYSAQKQFWKAAKQSASSNTDPNLLKRLHHAAEIEKKQNETENKKLLGTSIQYGRAVVQLLHLKSNKYLTVNKRLPSLLEKNAMRVYLDANGNEGSWFYIKPFYKLRSIGDYVVVVGDKVILSPVNADQQNLHVAANYELPDNPGCKEVNVLNSSTSWKISLFMEHKENQEHILKGGDVVRLFHAEQEKFLTMDEYKKQYHVFLRTTGRTSATAATSSKALWEIEVVQHDSCRGGAGDWNSLYRFKHLATGHYLAAEAEIDVSAGAMSATSASGHDLHLGDCSKDSGLSCSTMNSTINDKPKGKQYRLVSVPYSADIASVFVLDATTMARPDSLVPQSSYVRLQHICSNTWVHATSIPIDADDDKPVMSMVCCSPIKEDKEAFALIPVSPVEVRDLDFANDACKVLATVTSKLDNGSISINERRALISLLQDIVYFIAGMENEQNKTKALEFTIKNPIRDRQKLLREQYILKQLFKILQGPFQEHTAGDGPFLRLDELSDPKNSPYKNIFRLCYRILRLSQQDYRKNQEYIAKHFGLMQKQIGYDILAEDTITALLHNNRKLLEKHITAAEIETFVGLVRKNMHNWDSRFLDYLSDLCVSNRKAIAVTQELICKSVLSDKNKDILIETQVKALRTGSGPVRCYKGNSEDVCLATLAEDPGDDEDRSDVQSTSTTTTWDSASLNEDDGTPSTGDKYEIHLKWTGQPTSRSMADLASCDGGELEAAILNYYRHQLNLFSNMCLNRQYLALNELSPRLDIDLILKCMSDETMPYELRASFCRLMLHLHVDRDPQEPVTPVKYARLWSEIPSKMSIQDYDGKNQQPDQNKQACRAKFNTTIAFVENYLCNVATKVWLFTDQEQNKLTFEVVKLARDLIYFGFYSFSDLLRLTKTLLSILDCVSDTSSGEFASTDIDSVEEETNAEAEGGVLRSIGDINTVMTSLALGSVGQAIAAPTISLQQRKSVSQLMKEYPLVMDTKLKIIEILQFILDVRLDYRISCLLSIFKREFDESEVAASAASNEASQQQSQQQEPQTPGSSNETDPLDSAESVAAGAAAAAATTARQKNIDLESIGVQAEGIFDCERSDAANLDLDGQGGRTFLRVLLHLIMHDYAPLVSGALHLLFRHFSQRQEVLQAFRQVQLLVSDSDVESYKQIKSDLDILRQSVEKSELWVYKAKATDELGATDAGGDAVSLEYNAALSQEQRNEYRKVKEILIRMNKFCVTASGPGSVVKPRKHEQRLLRNVGVHTVVLDLLQNPYDEKDDELMKELMCLAHEFLQNFCLGNQQNQVLLHNHLDLFLNPGILEAKTVCAIFKDNLALCNEVTDKVVQHFVHCIEIHGRHVAYLQFLQTVVAAENQFIRRCQDMVMQELINSGEDVLVFYNDKGSFNHFVQMMQQQMLGMEKLSDDSPLKYHVELVKLLACCTMGKNVYTEIKCNNLLSLDDIVTIICHPLCMPEVKEAYVDFLNHCYIDTEVEMKEIYASGHMWSLFEKSFLVDINQLITNPAAASNKTLQAYVLNGVTNLLGSFFASPFSDQSAIVQSRQLIFVQLLQAAHRITQCRWLSLGDRFNVENCIRTLTESAKMRSIALPPELEQQVATMSSKTAMLTRQTTKWLLASKQPKYEAQQAASLMRWDRSIIEGLQDIVSLLEDQLKPVVEAELSLLVDILYRSELLFPAGTEARKRCESGGFIRKLIKHTEKLLEEKEERMCVKVLRTLREMMAIDVNYGEKGDALRQTLLLRYFQTKSTPRLPEDEVPLLAAPLMDPAKQNHLVTHGPGAKYLQRAGKTLHEMQNHLDREGASDLVVELVIKSVHSPNIFVEAVELGIALLEGGNPIIQKGMFQKFLSDDLNQAFFKVFFEKMKDAQQEIKSTVTVNTTDIAAKAHEHKQDTNLELDKIARKHGLKSNGVVITEELKRELHNAGLATARAYGNARNIHSGEESSAISVNSPLEDILAEKLEKHKDSRDQRNQLSNKVLVMQPILRFLQLLCENHNPDMQNLLRNQNNKTNNNLVSETLMFLDCICGSTTGGLGLLGLYINEHNLALINQTLEALTEYCQGPCHENQNCIATHESNGLDIITALILNNINPLGENRMDLVLELKNNASKLLLAIMESRGDSENAERILYNMNPKQLVEVACKAYHQEELIDEQDDGDEPDAGSDDDDATVSPREVGHNIYILCHQLAQHNKELAGLLKASEDPQSASFDAKTSQALMYYATHTAQIEIVRNDRTLEQIVFPIPEICEYLTTDTKIKILNTAERDDQGSKLADFFDKAEEMFNEMKWQKKLRSQPLLFWISSYMSLWSNILFNCVVVINMIVAFFYPFDNTVPELSSHISLLFWIITIFSLVIVLALPRESGIRTFIGSVILRFIFLLGPESTLCLLGVVTVTLKSVHIVSIMGNKGTLEKQLIKIITDFQLLYHCIYIAFCFCGLIFHPFFYSLLLFDVVYREETLVNVIRSVTRNGRSIVLTAVLALILVYLFSIIGYMFFKDDFLVSVDFEEQDNAPPPSVPLTLSVPVSGDSCSAPDDLGNCQAAKEVAPPSAGGGEVKERSCDSLVMCIVTTLNQGLRNGGGIGDILRAPSSKEGLFVARVIYDLLFFFIVIIIVLNLIFGVIIDTFADLRSEKQQKEAILKTTCFICSLNRSAFDNKTVSFEEHIKSEHNMWHYLYFIVLVKVKDPTEFTGPESYVYAMVKAGILEWFPRLRAMSLAAVDADGEQIELRSMQAQLLDTQLLIKNLSTQLHELKDHMTEQRKQKQRLGLLNTTANSLLPFQ</sequence>
<comment type="function">
    <text evidence="5 7 8">Receptor for inositol 1,4,5-trisphosphate, a second messenger that mediates the release of intracellular calcium (PubMed:1322910). Together with MCU, has a role in oxidative stress-induced ER-mitochondria calcium transfer (PubMed:28726639). May be involved in visual and olfactory transduction, and myoblast proliferation (PubMed:1322910). May be involved in ethanol tolerance (PubMed:29444420).</text>
</comment>
<comment type="subunit">
    <text>Homotetramer.</text>
</comment>
<comment type="subcellular location">
    <subcellularLocation>
        <location>Endoplasmic reticulum membrane</location>
        <topology>Multi-pass membrane protein</topology>
    </subcellularLocation>
</comment>
<comment type="alternative products">
    <event type="alternative splicing"/>
    <isoform>
        <id>P29993-1</id>
        <name>B</name>
        <name>Head</name>
        <sequence type="displayed"/>
    </isoform>
    <isoform>
        <id>P29993-2</id>
        <name>A</name>
        <name>Embryo</name>
        <sequence type="described" ref="VSP_002703"/>
    </isoform>
</comment>
<comment type="tissue specificity">
    <text evidence="5 6">Segmental expression of isoform B is first detected in stage 13 embryos in lateral and posterior epidermis. Expression extends to head region during stages 13-17: gnathal buds, clypeolabrum, procephalic lobe, labial organ and anterior sense organs. Adults exhibit high expression in antenna and lower expression in retina, head, legs and thorax.</text>
</comment>
<comment type="developmental stage">
    <text evidence="6">Isoform A is expressed only in early embryos. Isoform B is expressed from mid-late embryos to adults. Predominant expression is in the adult.</text>
</comment>
<comment type="domain">
    <text>The receptor contains a calcium channel in its C-terminal extremity. Its large N-terminal cytoplasmic region has the ligand-binding site in the N-terminus and modulatory sites in the middle portion immediately upstream of the channel region.</text>
</comment>
<comment type="disruption phenotype">
    <text evidence="7 8">RNAi-mediated knockdown in the perineurial glia results in decreased ethanol tolerance following repeated ethanol exposure (PubMed:29444420). RNAi-mediated knockdown in muscle reduces mitochondrial calcium uptake (PubMed:28726639).</text>
</comment>
<comment type="similarity">
    <text evidence="10">Belongs to the InsP3 receptor family.</text>
</comment>
<accession>P29993</accession>
<accession>Q24309</accession>
<accession>Q9U981</accession>
<accession>Q9VNC8</accession>
<gene>
    <name evidence="11" type="primary">Itpr</name>
    <name type="synonym">dip</name>
    <name type="synonym">InsP3R</name>
    <name type="synonym">Itp-r83A</name>
    <name evidence="11" type="ORF">CG1063</name>
</gene>
<keyword id="KW-0025">Alternative splicing</keyword>
<keyword id="KW-0106">Calcium</keyword>
<keyword id="KW-0107">Calcium channel</keyword>
<keyword id="KW-0109">Calcium transport</keyword>
<keyword id="KW-0217">Developmental protein</keyword>
<keyword id="KW-0256">Endoplasmic reticulum</keyword>
<keyword id="KW-0407">Ion channel</keyword>
<keyword id="KW-0406">Ion transport</keyword>
<keyword id="KW-1071">Ligand-gated ion channel</keyword>
<keyword id="KW-0472">Membrane</keyword>
<keyword id="KW-0552">Olfaction</keyword>
<keyword id="KW-0597">Phosphoprotein</keyword>
<keyword id="KW-0675">Receptor</keyword>
<keyword id="KW-1185">Reference proteome</keyword>
<keyword id="KW-0677">Repeat</keyword>
<keyword id="KW-0716">Sensory transduction</keyword>
<keyword id="KW-0812">Transmembrane</keyword>
<keyword id="KW-1133">Transmembrane helix</keyword>
<keyword id="KW-0813">Transport</keyword>
<keyword id="KW-0844">Vision</keyword>
<feature type="chain" id="PRO_0000153931" description="Inositol 1,4,5-trisphosphate receptor">
    <location>
        <begin position="1"/>
        <end position="2838"/>
    </location>
</feature>
<feature type="topological domain" description="Cytoplasmic" evidence="2">
    <location>
        <begin position="1"/>
        <end position="2366"/>
    </location>
</feature>
<feature type="transmembrane region" description="Helical" evidence="2">
    <location>
        <begin position="2367"/>
        <end position="2387"/>
    </location>
</feature>
<feature type="topological domain" description="Extracellular" evidence="2">
    <location>
        <begin position="2388"/>
        <end position="2398"/>
    </location>
</feature>
<feature type="transmembrane region" description="Helical" evidence="2">
    <location>
        <begin position="2399"/>
        <end position="2419"/>
    </location>
</feature>
<feature type="topological domain" description="Cytoplasmic" evidence="2">
    <location>
        <begin position="2420"/>
        <end position="2434"/>
    </location>
</feature>
<feature type="transmembrane region" description="Helical" evidence="2">
    <location>
        <begin position="2435"/>
        <end position="2455"/>
    </location>
</feature>
<feature type="topological domain" description="Extracellular" evidence="2">
    <location>
        <begin position="2456"/>
        <end position="2487"/>
    </location>
</feature>
<feature type="transmembrane region" description="Helical" evidence="2">
    <location>
        <begin position="2488"/>
        <end position="2508"/>
    </location>
</feature>
<feature type="topological domain" description="Cytoplasmic" evidence="2">
    <location>
        <begin position="2509"/>
        <end position="2531"/>
    </location>
</feature>
<feature type="transmembrane region" description="Helical" evidence="2">
    <location>
        <begin position="2532"/>
        <end position="2552"/>
    </location>
</feature>
<feature type="topological domain" description="Extracellular" evidence="2">
    <location>
        <begin position="2553"/>
        <end position="2659"/>
    </location>
</feature>
<feature type="transmembrane region" description="Helical" evidence="2">
    <location>
        <begin position="2660"/>
        <end position="2680"/>
    </location>
</feature>
<feature type="topological domain" description="Cytoplasmic" evidence="2">
    <location>
        <begin position="2681"/>
        <end position="2838"/>
    </location>
</feature>
<feature type="domain" description="MIR 1" evidence="3">
    <location>
        <begin position="115"/>
        <end position="170"/>
    </location>
</feature>
<feature type="domain" description="MIR 2" evidence="3">
    <location>
        <begin position="177"/>
        <end position="229"/>
    </location>
</feature>
<feature type="domain" description="MIR 3" evidence="3">
    <location>
        <begin position="237"/>
        <end position="293"/>
    </location>
</feature>
<feature type="domain" description="MIR 4" evidence="3">
    <location>
        <begin position="300"/>
        <end position="359"/>
    </location>
</feature>
<feature type="domain" description="MIR 5" evidence="3">
    <location>
        <begin position="398"/>
        <end position="454"/>
    </location>
</feature>
<feature type="region of interest" description="Disordered" evidence="4">
    <location>
        <begin position="723"/>
        <end position="760"/>
    </location>
</feature>
<feature type="region of interest" description="Disordered" evidence="4">
    <location>
        <begin position="1080"/>
        <end position="1112"/>
    </location>
</feature>
<feature type="region of interest" description="Disordered" evidence="4">
    <location>
        <begin position="2213"/>
        <end position="2233"/>
    </location>
</feature>
<feature type="compositionally biased region" description="Low complexity" evidence="4">
    <location>
        <begin position="735"/>
        <end position="748"/>
    </location>
</feature>
<feature type="compositionally biased region" description="Low complexity" evidence="4">
    <location>
        <begin position="1080"/>
        <end position="1098"/>
    </location>
</feature>
<feature type="compositionally biased region" description="Acidic residues" evidence="4">
    <location>
        <begin position="2213"/>
        <end position="2231"/>
    </location>
</feature>
<feature type="binding site" evidence="1">
    <location>
        <begin position="272"/>
        <end position="276"/>
    </location>
    <ligand>
        <name>1D-myo-inositol 1,4,5-trisphosphate</name>
        <dbReference type="ChEBI" id="CHEBI:203600"/>
    </ligand>
</feature>
<feature type="binding site" evidence="1">
    <location>
        <begin position="530"/>
        <end position="533"/>
    </location>
    <ligand>
        <name>1D-myo-inositol 1,4,5-trisphosphate</name>
        <dbReference type="ChEBI" id="CHEBI:203600"/>
    </ligand>
</feature>
<feature type="binding site" evidence="1">
    <location>
        <begin position="591"/>
        <end position="593"/>
    </location>
    <ligand>
        <name>1D-myo-inositol 1,4,5-trisphosphate</name>
        <dbReference type="ChEBI" id="CHEBI:203600"/>
    </ligand>
</feature>
<feature type="splice variant" id="VSP_002703" description="In isoform A." evidence="9">
    <location>
        <begin position="981"/>
        <end position="989"/>
    </location>
</feature>
<feature type="sequence conflict" description="In Ref. 3; AAF52015/AAN13240." evidence="10" ref="3">
    <location>
        <position position="183"/>
    </location>
</feature>
<feature type="sequence conflict" description="In Ref. 3; AAF52015/AAN13240." evidence="10" ref="3">
    <original>E</original>
    <variation>Q</variation>
    <location>
        <position position="551"/>
    </location>
</feature>
<feature type="sequence conflict" description="In Ref. 3; AAF52015/AAN13240." evidence="10" ref="3">
    <original>P</original>
    <variation>A</variation>
    <location>
        <position position="726"/>
    </location>
</feature>
<feature type="sequence conflict" description="In Ref. 1 and 2." evidence="10" ref="1 2">
    <original>AASAASNEASQQQSQQQEPQTPGSSNETDPLDSAESVAAGAA</original>
    <variation>PLRPLAMRQVSSSRNNRNRRRLAAPMRLIPSTVPSLWPPRC</variation>
    <location>
        <begin position="1079"/>
        <end position="1120"/>
    </location>
</feature>
<feature type="sequence conflict" description="In Ref. 1; BAA14399." evidence="10" ref="1">
    <original>SDA</original>
    <variation>TP</variation>
    <location>
        <begin position="1150"/>
        <end position="1152"/>
    </location>
</feature>
<feature type="sequence conflict" description="In Ref. 2; CAB51853." evidence="10" ref="2">
    <original>VQHF</original>
    <variation>GVGHSV</variation>
    <location>
        <begin position="1394"/>
        <end position="1397"/>
    </location>
</feature>
<feature type="sequence conflict" description="In Ref. 1; BAA14399." evidence="10" ref="1">
    <location>
        <position position="1395"/>
    </location>
</feature>
<feature type="sequence conflict" description="In Ref. 3; AAF52015/AAN13240." evidence="10" ref="3">
    <original>A</original>
    <variation>R</variation>
    <location>
        <position position="1419"/>
    </location>
</feature>
<feature type="sequence conflict" description="In Ref. 3; AAF52015/AAN13240." evidence="10" ref="3">
    <original>G</original>
    <variation>R</variation>
    <location>
        <position position="1466"/>
    </location>
</feature>
<feature type="sequence conflict" description="In Ref. 3; AAF52015/AAN13240." evidence="10" ref="3">
    <original>L</original>
    <variation>V</variation>
    <location>
        <position position="2108"/>
    </location>
</feature>
<feature type="sequence conflict" description="In Ref. 3; AAF52015/AAN13240." evidence="10" ref="3">
    <original>L</original>
    <variation>V</variation>
    <location>
        <position position="2333"/>
    </location>
</feature>
<feature type="sequence conflict" description="In Ref. 5." evidence="10" ref="5">
    <original>V</original>
    <variation>I</variation>
    <location>
        <position position="2452"/>
    </location>
</feature>
<feature type="sequence conflict" description="In Ref. 1 and 2." evidence="10" ref="1 2">
    <original>QLLYHCIYIAFCFCG</original>
    <variation>STYTALYSVLLLR</variation>
    <location>
        <begin position="2483"/>
        <end position="2497"/>
    </location>
</feature>
<feature type="sequence conflict" description="In Ref. 5." evidence="10" ref="5">
    <original>D</original>
    <variation>H</variation>
    <location>
        <position position="2511"/>
    </location>
</feature>
<feature type="sequence conflict" description="In Ref. 1; BAA14399." evidence="10" ref="1">
    <original>N</original>
    <variation>F</variation>
    <location>
        <position position="2802"/>
    </location>
</feature>
<feature type="sequence conflict" description="In Ref. 5." evidence="10" ref="5">
    <original>L</original>
    <variation>V</variation>
    <location>
        <position position="2807"/>
    </location>
</feature>
<reference key="1">
    <citation type="journal article" date="1992" name="J. Biol. Chem.">
        <title>Molecular cloning and characterization of the inositol 1,4,5-trisphosphate receptor in Drosophila melanogaster.</title>
        <authorList>
            <person name="Yoshikawa S."/>
            <person name="Tanimura T."/>
            <person name="Miyawaki A."/>
            <person name="Nakamura M."/>
            <person name="Yuzaki M."/>
            <person name="Furuichi T."/>
            <person name="Mikoshiba K."/>
        </authorList>
    </citation>
    <scope>NUCLEOTIDE SEQUENCE [MRNA] (ISOFORM B)</scope>
    <scope>FUNCTION</scope>
    <scope>TISSUE SPECIFICITY</scope>
    <source>
        <strain>Oregon-R</strain>
        <tissue>Head</tissue>
    </source>
</reference>
<reference key="2">
    <citation type="journal article" date="1999" name="Gene">
        <title>Sequencing and exon mapping of the inositol 1,4,5-trisphosphate receptor cDNA from Drosophila embryos suggests the presence of differentially regulated forms of RNA and protein.</title>
        <authorList>
            <person name="Sinha M."/>
            <person name="Hasan G."/>
        </authorList>
    </citation>
    <scope>NUCLEOTIDE SEQUENCE [MRNA] (ISOFORMS A AND B)</scope>
    <source>
        <tissue>Embryo</tissue>
    </source>
</reference>
<reference key="3">
    <citation type="journal article" date="2000" name="Science">
        <title>The genome sequence of Drosophila melanogaster.</title>
        <authorList>
            <person name="Adams M.D."/>
            <person name="Celniker S.E."/>
            <person name="Holt R.A."/>
            <person name="Evans C.A."/>
            <person name="Gocayne J.D."/>
            <person name="Amanatides P.G."/>
            <person name="Scherer S.E."/>
            <person name="Li P.W."/>
            <person name="Hoskins R.A."/>
            <person name="Galle R.F."/>
            <person name="George R.A."/>
            <person name="Lewis S.E."/>
            <person name="Richards S."/>
            <person name="Ashburner M."/>
            <person name="Henderson S.N."/>
            <person name="Sutton G.G."/>
            <person name="Wortman J.R."/>
            <person name="Yandell M.D."/>
            <person name="Zhang Q."/>
            <person name="Chen L.X."/>
            <person name="Brandon R.C."/>
            <person name="Rogers Y.-H.C."/>
            <person name="Blazej R.G."/>
            <person name="Champe M."/>
            <person name="Pfeiffer B.D."/>
            <person name="Wan K.H."/>
            <person name="Doyle C."/>
            <person name="Baxter E.G."/>
            <person name="Helt G."/>
            <person name="Nelson C.R."/>
            <person name="Miklos G.L.G."/>
            <person name="Abril J.F."/>
            <person name="Agbayani A."/>
            <person name="An H.-J."/>
            <person name="Andrews-Pfannkoch C."/>
            <person name="Baldwin D."/>
            <person name="Ballew R.M."/>
            <person name="Basu A."/>
            <person name="Baxendale J."/>
            <person name="Bayraktaroglu L."/>
            <person name="Beasley E.M."/>
            <person name="Beeson K.Y."/>
            <person name="Benos P.V."/>
            <person name="Berman B.P."/>
            <person name="Bhandari D."/>
            <person name="Bolshakov S."/>
            <person name="Borkova D."/>
            <person name="Botchan M.R."/>
            <person name="Bouck J."/>
            <person name="Brokstein P."/>
            <person name="Brottier P."/>
            <person name="Burtis K.C."/>
            <person name="Busam D.A."/>
            <person name="Butler H."/>
            <person name="Cadieu E."/>
            <person name="Center A."/>
            <person name="Chandra I."/>
            <person name="Cherry J.M."/>
            <person name="Cawley S."/>
            <person name="Dahlke C."/>
            <person name="Davenport L.B."/>
            <person name="Davies P."/>
            <person name="de Pablos B."/>
            <person name="Delcher A."/>
            <person name="Deng Z."/>
            <person name="Mays A.D."/>
            <person name="Dew I."/>
            <person name="Dietz S.M."/>
            <person name="Dodson K."/>
            <person name="Doup L.E."/>
            <person name="Downes M."/>
            <person name="Dugan-Rocha S."/>
            <person name="Dunkov B.C."/>
            <person name="Dunn P."/>
            <person name="Durbin K.J."/>
            <person name="Evangelista C.C."/>
            <person name="Ferraz C."/>
            <person name="Ferriera S."/>
            <person name="Fleischmann W."/>
            <person name="Fosler C."/>
            <person name="Gabrielian A.E."/>
            <person name="Garg N.S."/>
            <person name="Gelbart W.M."/>
            <person name="Glasser K."/>
            <person name="Glodek A."/>
            <person name="Gong F."/>
            <person name="Gorrell J.H."/>
            <person name="Gu Z."/>
            <person name="Guan P."/>
            <person name="Harris M."/>
            <person name="Harris N.L."/>
            <person name="Harvey D.A."/>
            <person name="Heiman T.J."/>
            <person name="Hernandez J.R."/>
            <person name="Houck J."/>
            <person name="Hostin D."/>
            <person name="Houston K.A."/>
            <person name="Howland T.J."/>
            <person name="Wei M.-H."/>
            <person name="Ibegwam C."/>
            <person name="Jalali M."/>
            <person name="Kalush F."/>
            <person name="Karpen G.H."/>
            <person name="Ke Z."/>
            <person name="Kennison J.A."/>
            <person name="Ketchum K.A."/>
            <person name="Kimmel B.E."/>
            <person name="Kodira C.D."/>
            <person name="Kraft C.L."/>
            <person name="Kravitz S."/>
            <person name="Kulp D."/>
            <person name="Lai Z."/>
            <person name="Lasko P."/>
            <person name="Lei Y."/>
            <person name="Levitsky A.A."/>
            <person name="Li J.H."/>
            <person name="Li Z."/>
            <person name="Liang Y."/>
            <person name="Lin X."/>
            <person name="Liu X."/>
            <person name="Mattei B."/>
            <person name="McIntosh T.C."/>
            <person name="McLeod M.P."/>
            <person name="McPherson D."/>
            <person name="Merkulov G."/>
            <person name="Milshina N.V."/>
            <person name="Mobarry C."/>
            <person name="Morris J."/>
            <person name="Moshrefi A."/>
            <person name="Mount S.M."/>
            <person name="Moy M."/>
            <person name="Murphy B."/>
            <person name="Murphy L."/>
            <person name="Muzny D.M."/>
            <person name="Nelson D.L."/>
            <person name="Nelson D.R."/>
            <person name="Nelson K.A."/>
            <person name="Nixon K."/>
            <person name="Nusskern D.R."/>
            <person name="Pacleb J.M."/>
            <person name="Palazzolo M."/>
            <person name="Pittman G.S."/>
            <person name="Pan S."/>
            <person name="Pollard J."/>
            <person name="Puri V."/>
            <person name="Reese M.G."/>
            <person name="Reinert K."/>
            <person name="Remington K."/>
            <person name="Saunders R.D.C."/>
            <person name="Scheeler F."/>
            <person name="Shen H."/>
            <person name="Shue B.C."/>
            <person name="Siden-Kiamos I."/>
            <person name="Simpson M."/>
            <person name="Skupski M.P."/>
            <person name="Smith T.J."/>
            <person name="Spier E."/>
            <person name="Spradling A.C."/>
            <person name="Stapleton M."/>
            <person name="Strong R."/>
            <person name="Sun E."/>
            <person name="Svirskas R."/>
            <person name="Tector C."/>
            <person name="Turner R."/>
            <person name="Venter E."/>
            <person name="Wang A.H."/>
            <person name="Wang X."/>
            <person name="Wang Z.-Y."/>
            <person name="Wassarman D.A."/>
            <person name="Weinstock G.M."/>
            <person name="Weissenbach J."/>
            <person name="Williams S.M."/>
            <person name="Woodage T."/>
            <person name="Worley K.C."/>
            <person name="Wu D."/>
            <person name="Yang S."/>
            <person name="Yao Q.A."/>
            <person name="Ye J."/>
            <person name="Yeh R.-F."/>
            <person name="Zaveri J.S."/>
            <person name="Zhan M."/>
            <person name="Zhang G."/>
            <person name="Zhao Q."/>
            <person name="Zheng L."/>
            <person name="Zheng X.H."/>
            <person name="Zhong F.N."/>
            <person name="Zhong W."/>
            <person name="Zhou X."/>
            <person name="Zhu S.C."/>
            <person name="Zhu X."/>
            <person name="Smith H.O."/>
            <person name="Gibbs R.A."/>
            <person name="Myers E.W."/>
            <person name="Rubin G.M."/>
            <person name="Venter J.C."/>
        </authorList>
    </citation>
    <scope>NUCLEOTIDE SEQUENCE [LARGE SCALE GENOMIC DNA]</scope>
    <source>
        <strain>Berkeley</strain>
    </source>
</reference>
<reference key="4">
    <citation type="journal article" date="2002" name="Genome Biol.">
        <title>Annotation of the Drosophila melanogaster euchromatic genome: a systematic review.</title>
        <authorList>
            <person name="Misra S."/>
            <person name="Crosby M.A."/>
            <person name="Mungall C.J."/>
            <person name="Matthews B.B."/>
            <person name="Campbell K.S."/>
            <person name="Hradecky P."/>
            <person name="Huang Y."/>
            <person name="Kaminker J.S."/>
            <person name="Millburn G.H."/>
            <person name="Prochnik S.E."/>
            <person name="Smith C.D."/>
            <person name="Tupy J.L."/>
            <person name="Whitfield E.J."/>
            <person name="Bayraktaroglu L."/>
            <person name="Berman B.P."/>
            <person name="Bettencourt B.R."/>
            <person name="Celniker S.E."/>
            <person name="de Grey A.D.N.J."/>
            <person name="Drysdale R.A."/>
            <person name="Harris N.L."/>
            <person name="Richter J."/>
            <person name="Russo S."/>
            <person name="Schroeder A.J."/>
            <person name="Shu S.Q."/>
            <person name="Stapleton M."/>
            <person name="Yamada C."/>
            <person name="Ashburner M."/>
            <person name="Gelbart W.M."/>
            <person name="Rubin G.M."/>
            <person name="Lewis S.E."/>
        </authorList>
    </citation>
    <scope>GENOME REANNOTATION</scope>
    <scope>ALTERNATIVE SPLICING</scope>
    <source>
        <strain>Berkeley</strain>
    </source>
</reference>
<reference key="5">
    <citation type="journal article" date="1992" name="Development">
        <title>Drosophila homologs of two mammalian intracellular Ca(2+)-release channels: identification and expression patterns of the inositol 1,4,5-triphosphate and the ryanodine receptor genes.</title>
        <authorList>
            <person name="Hasan G."/>
            <person name="Rosbash M."/>
        </authorList>
    </citation>
    <scope>NUCLEOTIDE SEQUENCE OF 2370-2837</scope>
    <scope>TISSUE SPECIFICITY</scope>
    <scope>DEVELOPMENTAL STAGE</scope>
    <source>
        <tissue>Brain</tissue>
    </source>
</reference>
<reference key="6">
    <citation type="journal article" date="2017" name="J. Biol. Chem.">
        <title>Mitochondrial calcium uniporter in Drosophila transfers calcium between the endoplasmic reticulum and mitochondria in oxidative stress-induced cell death.</title>
        <authorList>
            <person name="Choi S."/>
            <person name="Quan X."/>
            <person name="Bang S."/>
            <person name="Yoo H."/>
            <person name="Kim J."/>
            <person name="Park J."/>
            <person name="Park K.S."/>
            <person name="Chung J."/>
        </authorList>
    </citation>
    <scope>FUNCTION</scope>
    <scope>DISRUPTION PHENOTYPE</scope>
</reference>
<reference key="7">
    <citation type="journal article" date="2018" name="Cell Rep.">
        <title>Perineurial Barrier Glia Physically Respond to Alcohol in an Akap200-Dependent Manner to Promote Tolerance.</title>
        <authorList>
            <person name="Parkhurst S.J."/>
            <person name="Adhikari P."/>
            <person name="Navarrete J.S."/>
            <person name="Legendre A."/>
            <person name="Manansala M."/>
            <person name="Wolf F.W."/>
        </authorList>
    </citation>
    <scope>FUNCTION</scope>
    <scope>DISRUPTION PHENOTYPE</scope>
</reference>
<name>ITPR_DROME</name>
<proteinExistence type="evidence at transcript level"/>
<organism>
    <name type="scientific">Drosophila melanogaster</name>
    <name type="common">Fruit fly</name>
    <dbReference type="NCBI Taxonomy" id="7227"/>
    <lineage>
        <taxon>Eukaryota</taxon>
        <taxon>Metazoa</taxon>
        <taxon>Ecdysozoa</taxon>
        <taxon>Arthropoda</taxon>
        <taxon>Hexapoda</taxon>
        <taxon>Insecta</taxon>
        <taxon>Pterygota</taxon>
        <taxon>Neoptera</taxon>
        <taxon>Endopterygota</taxon>
        <taxon>Diptera</taxon>
        <taxon>Brachycera</taxon>
        <taxon>Muscomorpha</taxon>
        <taxon>Ephydroidea</taxon>
        <taxon>Drosophilidae</taxon>
        <taxon>Drosophila</taxon>
        <taxon>Sophophora</taxon>
    </lineage>
</organism>
<protein>
    <recommendedName>
        <fullName evidence="10">Inositol 1,4,5-trisphosphate receptor</fullName>
    </recommendedName>
    <alternativeName>
        <fullName evidence="10">InsP3 receptor</fullName>
        <shortName evidence="10">IP3R</shortName>
        <shortName evidence="10">InsP3R</shortName>
    </alternativeName>
</protein>
<dbReference type="EMBL" id="D90403">
    <property type="protein sequence ID" value="BAA14399.1"/>
    <property type="molecule type" value="mRNA"/>
</dbReference>
<dbReference type="EMBL" id="AJ238949">
    <property type="protein sequence ID" value="CAB51853.1"/>
    <property type="molecule type" value="mRNA"/>
</dbReference>
<dbReference type="EMBL" id="AE014297">
    <property type="protein sequence ID" value="AAF52015.2"/>
    <property type="molecule type" value="Genomic_DNA"/>
</dbReference>
<dbReference type="EMBL" id="AE014297">
    <property type="protein sequence ID" value="AAN13240.1"/>
    <property type="molecule type" value="Genomic_DNA"/>
</dbReference>
<dbReference type="EMBL" id="Z18535">
    <property type="protein sequence ID" value="CAA79220.1"/>
    <property type="molecule type" value="mRNA"/>
</dbReference>
<dbReference type="PIR" id="A43360">
    <property type="entry name" value="A43360"/>
</dbReference>
<dbReference type="RefSeq" id="NP_001287180.1">
    <property type="nucleotide sequence ID" value="NM_001300251.1"/>
</dbReference>
<dbReference type="RefSeq" id="NP_730941.1">
    <property type="nucleotide sequence ID" value="NM_169060.2"/>
</dbReference>
<dbReference type="RefSeq" id="NP_730942.1">
    <property type="nucleotide sequence ID" value="NM_169061.2"/>
</dbReference>
<dbReference type="SMR" id="P29993"/>
<dbReference type="BioGRID" id="65871">
    <property type="interactions" value="21"/>
</dbReference>
<dbReference type="FunCoup" id="P29993">
    <property type="interactions" value="350"/>
</dbReference>
<dbReference type="IntAct" id="P29993">
    <property type="interactions" value="5"/>
</dbReference>
<dbReference type="STRING" id="7227.FBpp0078336"/>
<dbReference type="TCDB" id="1.A.3.2.2">
    <property type="family name" value="the ryanodine-inositol 1,4,5-triphosphate receptor ca(2+) channel (rir-cac) family"/>
</dbReference>
<dbReference type="GlyGen" id="P29993">
    <property type="glycosylation" value="1 site"/>
</dbReference>
<dbReference type="PaxDb" id="7227-FBpp0078336"/>
<dbReference type="GeneID" id="40664"/>
<dbReference type="KEGG" id="dme:Dmel_CG1063"/>
<dbReference type="AGR" id="FB:FBgn0010051"/>
<dbReference type="CTD" id="40664"/>
<dbReference type="FlyBase" id="FBgn0010051">
    <property type="gene designation" value="Itpr"/>
</dbReference>
<dbReference type="VEuPathDB" id="VectorBase:FBgn0010051"/>
<dbReference type="eggNOG" id="KOG3533">
    <property type="taxonomic scope" value="Eukaryota"/>
</dbReference>
<dbReference type="InParanoid" id="P29993"/>
<dbReference type="OrthoDB" id="76898at2759"/>
<dbReference type="PhylomeDB" id="P29993"/>
<dbReference type="Reactome" id="R-DME-114508">
    <property type="pathway name" value="Effects of PIP2 hydrolysis"/>
</dbReference>
<dbReference type="Reactome" id="R-DME-139853">
    <property type="pathway name" value="Elevation of cytosolic Ca2+ levels"/>
</dbReference>
<dbReference type="Reactome" id="R-DME-381676">
    <property type="pathway name" value="Glucagon-like Peptide-1 (GLP1) regulates insulin secretion"/>
</dbReference>
<dbReference type="Reactome" id="R-DME-5578775">
    <property type="pathway name" value="Ion homeostasis"/>
</dbReference>
<dbReference type="Reactome" id="R-DME-9717207">
    <property type="pathway name" value="Sensory perception of sweet, bitter, and umami (glutamate) taste"/>
</dbReference>
<dbReference type="Reactome" id="R-DME-983695">
    <property type="pathway name" value="Antigen activates B Cell Receptor (BCR) leading to generation of second messengers"/>
</dbReference>
<dbReference type="SignaLink" id="P29993"/>
<dbReference type="BioGRID-ORCS" id="40664">
    <property type="hits" value="0 hits in 3 CRISPR screens"/>
</dbReference>
<dbReference type="ChiTaRS" id="Itp-r83A">
    <property type="organism name" value="fly"/>
</dbReference>
<dbReference type="GenomeRNAi" id="40664"/>
<dbReference type="PRO" id="PR:P29993"/>
<dbReference type="Proteomes" id="UP000000803">
    <property type="component" value="Chromosome 3R"/>
</dbReference>
<dbReference type="ExpressionAtlas" id="P29993">
    <property type="expression patterns" value="baseline and differential"/>
</dbReference>
<dbReference type="GO" id="GO:0044295">
    <property type="term" value="C:axonal growth cone"/>
    <property type="evidence" value="ECO:0000314"/>
    <property type="project" value="FlyBase"/>
</dbReference>
<dbReference type="GO" id="GO:0005783">
    <property type="term" value="C:endoplasmic reticulum"/>
    <property type="evidence" value="ECO:0000314"/>
    <property type="project" value="FlyBase"/>
</dbReference>
<dbReference type="GO" id="GO:0005789">
    <property type="term" value="C:endoplasmic reticulum membrane"/>
    <property type="evidence" value="ECO:0000318"/>
    <property type="project" value="GO_Central"/>
</dbReference>
<dbReference type="GO" id="GO:0005886">
    <property type="term" value="C:plasma membrane"/>
    <property type="evidence" value="ECO:0000318"/>
    <property type="project" value="GO_Central"/>
</dbReference>
<dbReference type="GO" id="GO:0016529">
    <property type="term" value="C:sarcoplasmic reticulum"/>
    <property type="evidence" value="ECO:0000318"/>
    <property type="project" value="GO_Central"/>
</dbReference>
<dbReference type="GO" id="GO:0030667">
    <property type="term" value="C:secretory granule membrane"/>
    <property type="evidence" value="ECO:0000318"/>
    <property type="project" value="GO_Central"/>
</dbReference>
<dbReference type="GO" id="GO:0005790">
    <property type="term" value="C:smooth endoplasmic reticulum"/>
    <property type="evidence" value="ECO:0000314"/>
    <property type="project" value="FlyBase"/>
</dbReference>
<dbReference type="GO" id="GO:0005509">
    <property type="term" value="F:calcium ion binding"/>
    <property type="evidence" value="ECO:0000318"/>
    <property type="project" value="GO_Central"/>
</dbReference>
<dbReference type="GO" id="GO:0070679">
    <property type="term" value="F:inositol 1,4,5 trisphosphate binding"/>
    <property type="evidence" value="ECO:0000318"/>
    <property type="project" value="GO_Central"/>
</dbReference>
<dbReference type="GO" id="GO:0005220">
    <property type="term" value="F:inositol 1,4,5-trisphosphate-gated calcium channel activity"/>
    <property type="evidence" value="ECO:0000314"/>
    <property type="project" value="FlyBase"/>
</dbReference>
<dbReference type="GO" id="GO:0035091">
    <property type="term" value="F:phosphatidylinositol binding"/>
    <property type="evidence" value="ECO:0000318"/>
    <property type="project" value="GO_Central"/>
</dbReference>
<dbReference type="GO" id="GO:0048102">
    <property type="term" value="P:autophagic cell death"/>
    <property type="evidence" value="ECO:0000315"/>
    <property type="project" value="FlyBase"/>
</dbReference>
<dbReference type="GO" id="GO:0070588">
    <property type="term" value="P:calcium ion transmembrane transport"/>
    <property type="evidence" value="ECO:0000315"/>
    <property type="project" value="UniProtKB"/>
</dbReference>
<dbReference type="GO" id="GO:0006816">
    <property type="term" value="P:calcium ion transport"/>
    <property type="evidence" value="ECO:0000316"/>
    <property type="project" value="UniProtKB"/>
</dbReference>
<dbReference type="GO" id="GO:0071361">
    <property type="term" value="P:cellular response to ethanol"/>
    <property type="evidence" value="ECO:0000315"/>
    <property type="project" value="UniProtKB"/>
</dbReference>
<dbReference type="GO" id="GO:0009267">
    <property type="term" value="P:cellular response to starvation"/>
    <property type="evidence" value="ECO:0000315"/>
    <property type="project" value="FlyBase"/>
</dbReference>
<dbReference type="GO" id="GO:0055089">
    <property type="term" value="P:fatty acid homeostasis"/>
    <property type="evidence" value="ECO:0000315"/>
    <property type="project" value="FlyBase"/>
</dbReference>
<dbReference type="GO" id="GO:0007629">
    <property type="term" value="P:flight behavior"/>
    <property type="evidence" value="ECO:0000315"/>
    <property type="project" value="FlyBase"/>
</dbReference>
<dbReference type="GO" id="GO:0006874">
    <property type="term" value="P:intracellular calcium ion homeostasis"/>
    <property type="evidence" value="ECO:0000315"/>
    <property type="project" value="FlyBase"/>
</dbReference>
<dbReference type="GO" id="GO:0030536">
    <property type="term" value="P:larval feeding behavior"/>
    <property type="evidence" value="ECO:0000315"/>
    <property type="project" value="FlyBase"/>
</dbReference>
<dbReference type="GO" id="GO:0055088">
    <property type="term" value="P:lipid homeostasis"/>
    <property type="evidence" value="ECO:0000315"/>
    <property type="project" value="FlyBase"/>
</dbReference>
<dbReference type="GO" id="GO:0007591">
    <property type="term" value="P:molting cycle, chitin-based cuticle"/>
    <property type="evidence" value="ECO:0000316"/>
    <property type="project" value="FlyBase"/>
</dbReference>
<dbReference type="GO" id="GO:0010888">
    <property type="term" value="P:negative regulation of lipid storage"/>
    <property type="evidence" value="ECO:0000315"/>
    <property type="project" value="FlyBase"/>
</dbReference>
<dbReference type="GO" id="GO:0000280">
    <property type="term" value="P:nuclear division"/>
    <property type="evidence" value="ECO:0000314"/>
    <property type="project" value="FlyBase"/>
</dbReference>
<dbReference type="GO" id="GO:0007200">
    <property type="term" value="P:phospholipase C-activating G protein-coupled receptor signaling pathway"/>
    <property type="evidence" value="ECO:0000315"/>
    <property type="project" value="FlyBase"/>
</dbReference>
<dbReference type="GO" id="GO:0046000">
    <property type="term" value="P:positive regulation of ecdysteroid secretion"/>
    <property type="evidence" value="ECO:0000315"/>
    <property type="project" value="FlyBase"/>
</dbReference>
<dbReference type="GO" id="GO:0060259">
    <property type="term" value="P:regulation of feeding behavior"/>
    <property type="evidence" value="ECO:0000315"/>
    <property type="project" value="FlyBase"/>
</dbReference>
<dbReference type="GO" id="GO:0051209">
    <property type="term" value="P:release of sequestered calcium ion into cytosol"/>
    <property type="evidence" value="ECO:0000315"/>
    <property type="project" value="FlyBase"/>
</dbReference>
<dbReference type="GO" id="GO:0006979">
    <property type="term" value="P:response to oxidative stress"/>
    <property type="evidence" value="ECO:0000315"/>
    <property type="project" value="UniProtKB"/>
</dbReference>
<dbReference type="GO" id="GO:0042594">
    <property type="term" value="P:response to starvation"/>
    <property type="evidence" value="ECO:0000315"/>
    <property type="project" value="FlyBase"/>
</dbReference>
<dbReference type="GO" id="GO:0007608">
    <property type="term" value="P:sensory perception of smell"/>
    <property type="evidence" value="ECO:0007669"/>
    <property type="project" value="UniProtKB-KW"/>
</dbReference>
<dbReference type="GO" id="GO:0050909">
    <property type="term" value="P:sensory perception of taste"/>
    <property type="evidence" value="ECO:0000314"/>
    <property type="project" value="FlyBase"/>
</dbReference>
<dbReference type="GO" id="GO:0030322">
    <property type="term" value="P:stabilization of membrane potential"/>
    <property type="evidence" value="ECO:0000316"/>
    <property type="project" value="FlyBase"/>
</dbReference>
<dbReference type="GO" id="GO:0007601">
    <property type="term" value="P:visual perception"/>
    <property type="evidence" value="ECO:0007669"/>
    <property type="project" value="UniProtKB-KW"/>
</dbReference>
<dbReference type="CDD" id="cd23277">
    <property type="entry name" value="beta-trefoil_MIR_ITPR"/>
    <property type="match status" value="1"/>
</dbReference>
<dbReference type="FunFam" id="2.80.10.50:FF:000002">
    <property type="entry name" value="Inositol 1,4,5-trisphosphate receptor type 2"/>
    <property type="match status" value="1"/>
</dbReference>
<dbReference type="FunFam" id="1.25.10.30:FF:000001">
    <property type="entry name" value="Inositol 1,4,5-trisphosphate receptor, type 2"/>
    <property type="match status" value="1"/>
</dbReference>
<dbReference type="Gene3D" id="1.10.287.70">
    <property type="match status" value="1"/>
</dbReference>
<dbReference type="Gene3D" id="2.80.10.50">
    <property type="match status" value="2"/>
</dbReference>
<dbReference type="Gene3D" id="1.25.10.30">
    <property type="entry name" value="IP3 receptor type 1 binding core, RIH domain"/>
    <property type="match status" value="1"/>
</dbReference>
<dbReference type="InterPro" id="IPR014821">
    <property type="entry name" value="Ins145_P3_rcpt"/>
</dbReference>
<dbReference type="InterPro" id="IPR000493">
    <property type="entry name" value="InsP3_rcpt"/>
</dbReference>
<dbReference type="InterPro" id="IPR005821">
    <property type="entry name" value="Ion_trans_dom"/>
</dbReference>
<dbReference type="InterPro" id="IPR036300">
    <property type="entry name" value="MIR_dom_sf"/>
</dbReference>
<dbReference type="InterPro" id="IPR016093">
    <property type="entry name" value="MIR_motif"/>
</dbReference>
<dbReference type="InterPro" id="IPR013662">
    <property type="entry name" value="RIH_assoc-dom"/>
</dbReference>
<dbReference type="InterPro" id="IPR000699">
    <property type="entry name" value="RIH_dom"/>
</dbReference>
<dbReference type="InterPro" id="IPR015925">
    <property type="entry name" value="Ryanodine_IP3_receptor"/>
</dbReference>
<dbReference type="InterPro" id="IPR035910">
    <property type="entry name" value="RyR/IP3R_RIH_dom_sf"/>
</dbReference>
<dbReference type="PANTHER" id="PTHR45816">
    <property type="entry name" value="MIR DOMAIN-CONTAINING PROTEIN"/>
    <property type="match status" value="1"/>
</dbReference>
<dbReference type="PANTHER" id="PTHR45816:SF4">
    <property type="entry name" value="RYR_IP3R HOMOLOGY ASSOCIATED DOMAIN-CONTAINING PROTEIN"/>
    <property type="match status" value="1"/>
</dbReference>
<dbReference type="Pfam" id="PF08709">
    <property type="entry name" value="Ins145_P3_rec"/>
    <property type="match status" value="1"/>
</dbReference>
<dbReference type="Pfam" id="PF00520">
    <property type="entry name" value="Ion_trans"/>
    <property type="match status" value="1"/>
</dbReference>
<dbReference type="Pfam" id="PF02815">
    <property type="entry name" value="MIR"/>
    <property type="match status" value="1"/>
</dbReference>
<dbReference type="Pfam" id="PF08454">
    <property type="entry name" value="RIH_assoc"/>
    <property type="match status" value="1"/>
</dbReference>
<dbReference type="Pfam" id="PF01365">
    <property type="entry name" value="RYDR_ITPR"/>
    <property type="match status" value="2"/>
</dbReference>
<dbReference type="PRINTS" id="PR00779">
    <property type="entry name" value="INSP3RECEPTR"/>
</dbReference>
<dbReference type="SMART" id="SM00472">
    <property type="entry name" value="MIR"/>
    <property type="match status" value="4"/>
</dbReference>
<dbReference type="SUPFAM" id="SSF100909">
    <property type="entry name" value="IP3 receptor type 1 binding core, domain 2"/>
    <property type="match status" value="2"/>
</dbReference>
<dbReference type="SUPFAM" id="SSF82109">
    <property type="entry name" value="MIR domain"/>
    <property type="match status" value="2"/>
</dbReference>
<dbReference type="PROSITE" id="PS50919">
    <property type="entry name" value="MIR"/>
    <property type="match status" value="5"/>
</dbReference>